<protein>
    <recommendedName>
        <fullName evidence="1">UDP-N-acetylmuramoylalanine--D-glutamate ligase</fullName>
        <ecNumber evidence="1">6.3.2.9</ecNumber>
    </recommendedName>
    <alternativeName>
        <fullName evidence="1">D-glutamic acid-adding enzyme</fullName>
    </alternativeName>
    <alternativeName>
        <fullName evidence="1">UDP-N-acetylmuramoyl-L-alanyl-D-glutamate synthetase</fullName>
    </alternativeName>
</protein>
<evidence type="ECO:0000255" key="1">
    <source>
        <dbReference type="HAMAP-Rule" id="MF_00639"/>
    </source>
</evidence>
<evidence type="ECO:0000305" key="2"/>
<comment type="function">
    <text evidence="1">Cell wall formation. Catalyzes the addition of glutamate to the nucleotide precursor UDP-N-acetylmuramoyl-L-alanine (UMA).</text>
</comment>
<comment type="catalytic activity">
    <reaction evidence="1">
        <text>UDP-N-acetyl-alpha-D-muramoyl-L-alanine + D-glutamate + ATP = UDP-N-acetyl-alpha-D-muramoyl-L-alanyl-D-glutamate + ADP + phosphate + H(+)</text>
        <dbReference type="Rhea" id="RHEA:16429"/>
        <dbReference type="ChEBI" id="CHEBI:15378"/>
        <dbReference type="ChEBI" id="CHEBI:29986"/>
        <dbReference type="ChEBI" id="CHEBI:30616"/>
        <dbReference type="ChEBI" id="CHEBI:43474"/>
        <dbReference type="ChEBI" id="CHEBI:83898"/>
        <dbReference type="ChEBI" id="CHEBI:83900"/>
        <dbReference type="ChEBI" id="CHEBI:456216"/>
        <dbReference type="EC" id="6.3.2.9"/>
    </reaction>
</comment>
<comment type="pathway">
    <text evidence="1">Cell wall biogenesis; peptidoglycan biosynthesis.</text>
</comment>
<comment type="subcellular location">
    <subcellularLocation>
        <location evidence="1">Cytoplasm</location>
    </subcellularLocation>
</comment>
<comment type="similarity">
    <text evidence="1">Belongs to the MurCDEF family.</text>
</comment>
<comment type="sequence caution" evidence="2">
    <conflict type="erroneous initiation">
        <sequence resource="EMBL-CDS" id="AAO78556"/>
    </conflict>
</comment>
<sequence>MKRIVILGAGESGAGAAVLAKVKGFETFVSDMSAIKDKYKDLLDSHHIAWEEGHHTEELILNADEVIKSPGIPNDAPLILKLKAQGTPVISEIEFAGRYTDAKMICITGSNGKTTTTSLIYHIFKSADLNVGLAGNIGKSLALQVAEEHHDYYIIELSSFQLDNMYNFRANIAVLMNITPDHLDRYDHCMQNYIDAKFRITQNQTTDDAFIFWNDDPIIKQELAKHGLKAHLYPFAAVKEDGAIAYVEDHEVKITEPIAFNMEQEELALTGQHNLYNSLAAGISANLAGITKENIRKALSDFKGVEHRLEKVARVRGIDFINDSKATNVNSCWYALQSMTTKTVLILGGKDKGNDYTEIEDLVREKCSALVYLGLHNEKLHAFFDRFGLPVADVQTGMKDAVEAAYKLAKKGETVLLSPCCASFDLFKSYEDRGDQFKKYVREL</sequence>
<keyword id="KW-0067">ATP-binding</keyword>
<keyword id="KW-0131">Cell cycle</keyword>
<keyword id="KW-0132">Cell division</keyword>
<keyword id="KW-0133">Cell shape</keyword>
<keyword id="KW-0961">Cell wall biogenesis/degradation</keyword>
<keyword id="KW-0963">Cytoplasm</keyword>
<keyword id="KW-0436">Ligase</keyword>
<keyword id="KW-0547">Nucleotide-binding</keyword>
<keyword id="KW-0573">Peptidoglycan synthesis</keyword>
<keyword id="KW-1185">Reference proteome</keyword>
<reference key="1">
    <citation type="journal article" date="2003" name="Science">
        <title>A genomic view of the human-Bacteroides thetaiotaomicron symbiosis.</title>
        <authorList>
            <person name="Xu J."/>
            <person name="Bjursell M.K."/>
            <person name="Himrod J."/>
            <person name="Deng S."/>
            <person name="Carmichael L.K."/>
            <person name="Chiang H.C."/>
            <person name="Hooper L.V."/>
            <person name="Gordon J.I."/>
        </authorList>
    </citation>
    <scope>NUCLEOTIDE SEQUENCE [LARGE SCALE GENOMIC DNA]</scope>
    <source>
        <strain>ATCC 29148 / DSM 2079 / JCM 5827 / CCUG 10774 / NCTC 10582 / VPI-5482 / E50</strain>
    </source>
</reference>
<proteinExistence type="inferred from homology"/>
<feature type="chain" id="PRO_0000108970" description="UDP-N-acetylmuramoylalanine--D-glutamate ligase">
    <location>
        <begin position="1"/>
        <end position="444"/>
    </location>
</feature>
<feature type="binding site" evidence="1">
    <location>
        <begin position="109"/>
        <end position="115"/>
    </location>
    <ligand>
        <name>ATP</name>
        <dbReference type="ChEBI" id="CHEBI:30616"/>
    </ligand>
</feature>
<gene>
    <name evidence="1" type="primary">murD</name>
    <name type="ordered locus">BT_3450</name>
</gene>
<name>MURD_BACTN</name>
<organism>
    <name type="scientific">Bacteroides thetaiotaomicron (strain ATCC 29148 / DSM 2079 / JCM 5827 / CCUG 10774 / NCTC 10582 / VPI-5482 / E50)</name>
    <dbReference type="NCBI Taxonomy" id="226186"/>
    <lineage>
        <taxon>Bacteria</taxon>
        <taxon>Pseudomonadati</taxon>
        <taxon>Bacteroidota</taxon>
        <taxon>Bacteroidia</taxon>
        <taxon>Bacteroidales</taxon>
        <taxon>Bacteroidaceae</taxon>
        <taxon>Bacteroides</taxon>
    </lineage>
</organism>
<dbReference type="EC" id="6.3.2.9" evidence="1"/>
<dbReference type="EMBL" id="AE015928">
    <property type="protein sequence ID" value="AAO78556.1"/>
    <property type="status" value="ALT_INIT"/>
    <property type="molecule type" value="Genomic_DNA"/>
</dbReference>
<dbReference type="RefSeq" id="NP_812362.1">
    <property type="nucleotide sequence ID" value="NC_004663.1"/>
</dbReference>
<dbReference type="RefSeq" id="WP_008763714.1">
    <property type="nucleotide sequence ID" value="NC_004663.1"/>
</dbReference>
<dbReference type="SMR" id="Q8A256"/>
<dbReference type="FunCoup" id="Q8A256">
    <property type="interactions" value="486"/>
</dbReference>
<dbReference type="STRING" id="226186.BT_3450"/>
<dbReference type="PaxDb" id="226186-BT_3450"/>
<dbReference type="EnsemblBacteria" id="AAO78556">
    <property type="protein sequence ID" value="AAO78556"/>
    <property type="gene ID" value="BT_3450"/>
</dbReference>
<dbReference type="GeneID" id="60924630"/>
<dbReference type="KEGG" id="bth:BT_3450"/>
<dbReference type="PATRIC" id="fig|226186.12.peg.3517"/>
<dbReference type="eggNOG" id="COG0771">
    <property type="taxonomic scope" value="Bacteria"/>
</dbReference>
<dbReference type="HOGENOM" id="CLU_032540_0_0_10"/>
<dbReference type="InParanoid" id="Q8A256"/>
<dbReference type="OrthoDB" id="9809796at2"/>
<dbReference type="UniPathway" id="UPA00219"/>
<dbReference type="Proteomes" id="UP000001414">
    <property type="component" value="Chromosome"/>
</dbReference>
<dbReference type="GO" id="GO:0005737">
    <property type="term" value="C:cytoplasm"/>
    <property type="evidence" value="ECO:0007669"/>
    <property type="project" value="UniProtKB-SubCell"/>
</dbReference>
<dbReference type="GO" id="GO:0005524">
    <property type="term" value="F:ATP binding"/>
    <property type="evidence" value="ECO:0007669"/>
    <property type="project" value="UniProtKB-UniRule"/>
</dbReference>
<dbReference type="GO" id="GO:0008764">
    <property type="term" value="F:UDP-N-acetylmuramoylalanine-D-glutamate ligase activity"/>
    <property type="evidence" value="ECO:0007669"/>
    <property type="project" value="UniProtKB-UniRule"/>
</dbReference>
<dbReference type="GO" id="GO:0051301">
    <property type="term" value="P:cell division"/>
    <property type="evidence" value="ECO:0007669"/>
    <property type="project" value="UniProtKB-KW"/>
</dbReference>
<dbReference type="GO" id="GO:0071555">
    <property type="term" value="P:cell wall organization"/>
    <property type="evidence" value="ECO:0007669"/>
    <property type="project" value="UniProtKB-KW"/>
</dbReference>
<dbReference type="GO" id="GO:0009252">
    <property type="term" value="P:peptidoglycan biosynthetic process"/>
    <property type="evidence" value="ECO:0007669"/>
    <property type="project" value="UniProtKB-UniRule"/>
</dbReference>
<dbReference type="GO" id="GO:0008360">
    <property type="term" value="P:regulation of cell shape"/>
    <property type="evidence" value="ECO:0007669"/>
    <property type="project" value="UniProtKB-KW"/>
</dbReference>
<dbReference type="Gene3D" id="3.90.190.20">
    <property type="entry name" value="Mur ligase, C-terminal domain"/>
    <property type="match status" value="1"/>
</dbReference>
<dbReference type="Gene3D" id="3.40.1190.10">
    <property type="entry name" value="Mur-like, catalytic domain"/>
    <property type="match status" value="1"/>
</dbReference>
<dbReference type="Gene3D" id="3.40.50.720">
    <property type="entry name" value="NAD(P)-binding Rossmann-like Domain"/>
    <property type="match status" value="1"/>
</dbReference>
<dbReference type="HAMAP" id="MF_00639">
    <property type="entry name" value="MurD"/>
    <property type="match status" value="1"/>
</dbReference>
<dbReference type="InterPro" id="IPR036565">
    <property type="entry name" value="Mur-like_cat_sf"/>
</dbReference>
<dbReference type="InterPro" id="IPR004101">
    <property type="entry name" value="Mur_ligase_C"/>
</dbReference>
<dbReference type="InterPro" id="IPR036615">
    <property type="entry name" value="Mur_ligase_C_dom_sf"/>
</dbReference>
<dbReference type="InterPro" id="IPR013221">
    <property type="entry name" value="Mur_ligase_cen"/>
</dbReference>
<dbReference type="InterPro" id="IPR005762">
    <property type="entry name" value="MurD"/>
</dbReference>
<dbReference type="NCBIfam" id="TIGR01087">
    <property type="entry name" value="murD"/>
    <property type="match status" value="1"/>
</dbReference>
<dbReference type="PANTHER" id="PTHR43692">
    <property type="entry name" value="UDP-N-ACETYLMURAMOYLALANINE--D-GLUTAMATE LIGASE"/>
    <property type="match status" value="1"/>
</dbReference>
<dbReference type="PANTHER" id="PTHR43692:SF1">
    <property type="entry name" value="UDP-N-ACETYLMURAMOYLALANINE--D-GLUTAMATE LIGASE"/>
    <property type="match status" value="1"/>
</dbReference>
<dbReference type="Pfam" id="PF02875">
    <property type="entry name" value="Mur_ligase_C"/>
    <property type="match status" value="1"/>
</dbReference>
<dbReference type="Pfam" id="PF08245">
    <property type="entry name" value="Mur_ligase_M"/>
    <property type="match status" value="1"/>
</dbReference>
<dbReference type="Pfam" id="PF21799">
    <property type="entry name" value="MurD-like_N"/>
    <property type="match status" value="1"/>
</dbReference>
<dbReference type="Pfam" id="PF21377">
    <property type="entry name" value="MurD_N"/>
    <property type="match status" value="1"/>
</dbReference>
<dbReference type="SUPFAM" id="SSF51984">
    <property type="entry name" value="MurCD N-terminal domain"/>
    <property type="match status" value="1"/>
</dbReference>
<dbReference type="SUPFAM" id="SSF53623">
    <property type="entry name" value="MurD-like peptide ligases, catalytic domain"/>
    <property type="match status" value="1"/>
</dbReference>
<dbReference type="SUPFAM" id="SSF53244">
    <property type="entry name" value="MurD-like peptide ligases, peptide-binding domain"/>
    <property type="match status" value="1"/>
</dbReference>
<accession>Q8A256</accession>